<reference key="1">
    <citation type="journal article" date="2003" name="Proc. Natl. Acad. Sci. U.S.A.">
        <title>Reductive genome evolution in Buchnera aphidicola.</title>
        <authorList>
            <person name="van Ham R.C.H.J."/>
            <person name="Kamerbeek J."/>
            <person name="Palacios C."/>
            <person name="Rausell C."/>
            <person name="Abascal F."/>
            <person name="Bastolla U."/>
            <person name="Fernandez J.M."/>
            <person name="Jimenez L."/>
            <person name="Postigo M."/>
            <person name="Silva F.J."/>
            <person name="Tamames J."/>
            <person name="Viguera E."/>
            <person name="Latorre A."/>
            <person name="Valencia A."/>
            <person name="Moran F."/>
            <person name="Moya A."/>
        </authorList>
    </citation>
    <scope>NUCLEOTIDE SEQUENCE [LARGE SCALE GENOMIC DNA]</scope>
    <source>
        <strain>Bp</strain>
    </source>
</reference>
<organism>
    <name type="scientific">Buchnera aphidicola subsp. Baizongia pistaciae (strain Bp)</name>
    <dbReference type="NCBI Taxonomy" id="224915"/>
    <lineage>
        <taxon>Bacteria</taxon>
        <taxon>Pseudomonadati</taxon>
        <taxon>Pseudomonadota</taxon>
        <taxon>Gammaproteobacteria</taxon>
        <taxon>Enterobacterales</taxon>
        <taxon>Erwiniaceae</taxon>
        <taxon>Buchnera</taxon>
    </lineage>
</organism>
<dbReference type="EMBL" id="AE016826">
    <property type="protein sequence ID" value="AAO27154.1"/>
    <property type="molecule type" value="Genomic_DNA"/>
</dbReference>
<dbReference type="RefSeq" id="WP_011091555.1">
    <property type="nucleotide sequence ID" value="NC_004545.1"/>
</dbReference>
<dbReference type="SMR" id="Q89A84"/>
<dbReference type="STRING" id="224915.bbp_448"/>
<dbReference type="KEGG" id="bab:bbp_448"/>
<dbReference type="eggNOG" id="COG0200">
    <property type="taxonomic scope" value="Bacteria"/>
</dbReference>
<dbReference type="HOGENOM" id="CLU_055188_4_2_6"/>
<dbReference type="OrthoDB" id="9810293at2"/>
<dbReference type="Proteomes" id="UP000000601">
    <property type="component" value="Chromosome"/>
</dbReference>
<dbReference type="GO" id="GO:0022625">
    <property type="term" value="C:cytosolic large ribosomal subunit"/>
    <property type="evidence" value="ECO:0007669"/>
    <property type="project" value="TreeGrafter"/>
</dbReference>
<dbReference type="GO" id="GO:0019843">
    <property type="term" value="F:rRNA binding"/>
    <property type="evidence" value="ECO:0007669"/>
    <property type="project" value="UniProtKB-UniRule"/>
</dbReference>
<dbReference type="GO" id="GO:0003735">
    <property type="term" value="F:structural constituent of ribosome"/>
    <property type="evidence" value="ECO:0007669"/>
    <property type="project" value="InterPro"/>
</dbReference>
<dbReference type="GO" id="GO:0006412">
    <property type="term" value="P:translation"/>
    <property type="evidence" value="ECO:0007669"/>
    <property type="project" value="UniProtKB-UniRule"/>
</dbReference>
<dbReference type="Gene3D" id="3.100.10.10">
    <property type="match status" value="1"/>
</dbReference>
<dbReference type="HAMAP" id="MF_01341">
    <property type="entry name" value="Ribosomal_uL15"/>
    <property type="match status" value="1"/>
</dbReference>
<dbReference type="InterPro" id="IPR030878">
    <property type="entry name" value="Ribosomal_uL15"/>
</dbReference>
<dbReference type="InterPro" id="IPR021131">
    <property type="entry name" value="Ribosomal_uL15/eL18"/>
</dbReference>
<dbReference type="InterPro" id="IPR036227">
    <property type="entry name" value="Ribosomal_uL15/eL18_sf"/>
</dbReference>
<dbReference type="InterPro" id="IPR005749">
    <property type="entry name" value="Ribosomal_uL15_bac-type"/>
</dbReference>
<dbReference type="NCBIfam" id="TIGR01071">
    <property type="entry name" value="rplO_bact"/>
    <property type="match status" value="1"/>
</dbReference>
<dbReference type="PANTHER" id="PTHR12934">
    <property type="entry name" value="50S RIBOSOMAL PROTEIN L15"/>
    <property type="match status" value="1"/>
</dbReference>
<dbReference type="PANTHER" id="PTHR12934:SF11">
    <property type="entry name" value="LARGE RIBOSOMAL SUBUNIT PROTEIN UL15M"/>
    <property type="match status" value="1"/>
</dbReference>
<dbReference type="Pfam" id="PF00828">
    <property type="entry name" value="Ribosomal_L27A"/>
    <property type="match status" value="1"/>
</dbReference>
<dbReference type="SUPFAM" id="SSF52080">
    <property type="entry name" value="Ribosomal proteins L15p and L18e"/>
    <property type="match status" value="1"/>
</dbReference>
<feature type="chain" id="PRO_0000104695" description="Large ribosomal subunit protein uL15">
    <location>
        <begin position="1"/>
        <end position="147"/>
    </location>
</feature>
<feature type="region of interest" description="Disordered" evidence="2">
    <location>
        <begin position="1"/>
        <end position="48"/>
    </location>
</feature>
<feature type="compositionally biased region" description="Polar residues" evidence="2">
    <location>
        <begin position="1"/>
        <end position="10"/>
    </location>
</feature>
<feature type="compositionally biased region" description="Basic residues" evidence="2">
    <location>
        <begin position="11"/>
        <end position="20"/>
    </location>
</feature>
<feature type="compositionally biased region" description="Gly residues" evidence="2">
    <location>
        <begin position="21"/>
        <end position="31"/>
    </location>
</feature>
<feature type="compositionally biased region" description="Basic residues" evidence="2">
    <location>
        <begin position="32"/>
        <end position="47"/>
    </location>
</feature>
<proteinExistence type="inferred from homology"/>
<sequence>MYLNTLSPNSKSHKKSKRVGRGIGSGFGKTSGRGHKGQKSRSGCKIRRGFEGGQMPLYRRIPKFGFVSLKKEKVAEVRLEDLKNFSNCIINLQFLKKTGLIKKNIKYVKIISSGSIITNILIIRNLFVSKSVRNIIESSGGKIEENN</sequence>
<name>RL15_BUCBP</name>
<keyword id="KW-1185">Reference proteome</keyword>
<keyword id="KW-0687">Ribonucleoprotein</keyword>
<keyword id="KW-0689">Ribosomal protein</keyword>
<keyword id="KW-0694">RNA-binding</keyword>
<keyword id="KW-0699">rRNA-binding</keyword>
<evidence type="ECO:0000255" key="1">
    <source>
        <dbReference type="HAMAP-Rule" id="MF_01341"/>
    </source>
</evidence>
<evidence type="ECO:0000256" key="2">
    <source>
        <dbReference type="SAM" id="MobiDB-lite"/>
    </source>
</evidence>
<evidence type="ECO:0000305" key="3"/>
<comment type="function">
    <text evidence="1">Binds to the 23S rRNA.</text>
</comment>
<comment type="subunit">
    <text evidence="1">Part of the 50S ribosomal subunit.</text>
</comment>
<comment type="similarity">
    <text evidence="1">Belongs to the universal ribosomal protein uL15 family.</text>
</comment>
<accession>Q89A84</accession>
<gene>
    <name evidence="1" type="primary">rplO</name>
    <name type="ordered locus">bbp_448</name>
</gene>
<protein>
    <recommendedName>
        <fullName evidence="1">Large ribosomal subunit protein uL15</fullName>
    </recommendedName>
    <alternativeName>
        <fullName evidence="3">50S ribosomal protein L15</fullName>
    </alternativeName>
</protein>